<proteinExistence type="inferred from homology"/>
<keyword id="KW-0227">DNA damage</keyword>
<keyword id="KW-0234">DNA repair</keyword>
<protein>
    <recommendedName>
        <fullName evidence="1">DNA mismatch repair protein MutL</fullName>
    </recommendedName>
</protein>
<gene>
    <name evidence="1" type="primary">mutL</name>
    <name type="ordered locus">EAT1b_0104</name>
</gene>
<comment type="function">
    <text evidence="1">This protein is involved in the repair of mismatches in DNA. It is required for dam-dependent methyl-directed DNA mismatch repair. May act as a 'molecular matchmaker', a protein that promotes the formation of a stable complex between two or more DNA-binding proteins in an ATP-dependent manner without itself being part of a final effector complex.</text>
</comment>
<comment type="similarity">
    <text evidence="1">Belongs to the DNA mismatch repair MutL/HexB family.</text>
</comment>
<sequence>MGIIRELPEQLANRIAAGEVVERPASVVKELVENAIDAGATKVDVDLQEAGIRLIKVRDNGHGFHEEDAARAFLRHATSKIRDEHDLFRIRTLGFRGEALASIASVSHVLLKSKRADEDGFEMTLEGGVVKETNPTATNVGTEIAVSQLFFNTPARLKYLKTSATELASITDTLNRLALSHPEIRFTVFHEEKELLRTNGNGDLKQVMLAIYGRQVAAQIVTASSKTSDYTLSAHLVRPEVTRSNKQYVTLILNGRSIKNFALTQSVLEGYHTLLPIGRYPIAVLEVKMDPMLIDVNVHPTKREVRLSKEKELCQLIRETVQLTLREQRLIPSVKQEPKLKRVTPSEQSKLDFSMEPQPKQADSVEWNYPIPRERKETLTSPSQWNPAPLVHEPEAEMIEPEQVEESVRQSERLPALDVIGQLHSSYIICGAEDGMYVMDQHAAQERIKYELFYEQLGRPEKEYQLLLIPLTLEFTQEETLAIEEVLPLLAEAGITLEPFGGNTFLVREIPTWYPQHDLEGTIRDLVEMAIQQRSIDIAKYREEASILMACKRSIKANHPLNMEMMRQLIDDLSRTTSPFTCPHGRPILVKWSTYELEKLFKRVM</sequence>
<accession>C4L192</accession>
<evidence type="ECO:0000255" key="1">
    <source>
        <dbReference type="HAMAP-Rule" id="MF_00149"/>
    </source>
</evidence>
<name>MUTL_EXISA</name>
<feature type="chain" id="PRO_1000203387" description="DNA mismatch repair protein MutL">
    <location>
        <begin position="1"/>
        <end position="605"/>
    </location>
</feature>
<reference key="1">
    <citation type="journal article" date="2011" name="J. Bacteriol.">
        <title>Complete genome sequence of the Thermophilic Bacterium Exiguobacterium sp. AT1b.</title>
        <authorList>
            <person name="Vishnivetskaya T.A."/>
            <person name="Lucas S."/>
            <person name="Copeland A."/>
            <person name="Lapidus A."/>
            <person name="Glavina del Rio T."/>
            <person name="Dalin E."/>
            <person name="Tice H."/>
            <person name="Bruce D.C."/>
            <person name="Goodwin L.A."/>
            <person name="Pitluck S."/>
            <person name="Saunders E."/>
            <person name="Brettin T."/>
            <person name="Detter C."/>
            <person name="Han C."/>
            <person name="Larimer F."/>
            <person name="Land M.L."/>
            <person name="Hauser L.J."/>
            <person name="Kyrpides N.C."/>
            <person name="Ovchinnikova G."/>
            <person name="Kathariou S."/>
            <person name="Ramaley R.F."/>
            <person name="Rodrigues D.F."/>
            <person name="Hendrix C."/>
            <person name="Richardson P."/>
            <person name="Tiedje J.M."/>
        </authorList>
    </citation>
    <scope>NUCLEOTIDE SEQUENCE [LARGE SCALE GENOMIC DNA]</scope>
    <source>
        <strain>ATCC BAA-1283 / AT1b</strain>
    </source>
</reference>
<organism>
    <name type="scientific">Exiguobacterium sp. (strain ATCC BAA-1283 / AT1b)</name>
    <dbReference type="NCBI Taxonomy" id="360911"/>
    <lineage>
        <taxon>Bacteria</taxon>
        <taxon>Bacillati</taxon>
        <taxon>Bacillota</taxon>
        <taxon>Bacilli</taxon>
        <taxon>Bacillales</taxon>
        <taxon>Bacillales Family XII. Incertae Sedis</taxon>
        <taxon>Exiguobacterium</taxon>
    </lineage>
</organism>
<dbReference type="EMBL" id="CP001615">
    <property type="protein sequence ID" value="ACQ69038.1"/>
    <property type="molecule type" value="Genomic_DNA"/>
</dbReference>
<dbReference type="RefSeq" id="WP_012726157.1">
    <property type="nucleotide sequence ID" value="NC_012673.1"/>
</dbReference>
<dbReference type="SMR" id="C4L192"/>
<dbReference type="STRING" id="360911.EAT1b_0104"/>
<dbReference type="KEGG" id="eat:EAT1b_0104"/>
<dbReference type="eggNOG" id="COG0323">
    <property type="taxonomic scope" value="Bacteria"/>
</dbReference>
<dbReference type="HOGENOM" id="CLU_004131_4_1_9"/>
<dbReference type="OrthoDB" id="9763467at2"/>
<dbReference type="Proteomes" id="UP000000716">
    <property type="component" value="Chromosome"/>
</dbReference>
<dbReference type="GO" id="GO:0032300">
    <property type="term" value="C:mismatch repair complex"/>
    <property type="evidence" value="ECO:0007669"/>
    <property type="project" value="InterPro"/>
</dbReference>
<dbReference type="GO" id="GO:0005524">
    <property type="term" value="F:ATP binding"/>
    <property type="evidence" value="ECO:0007669"/>
    <property type="project" value="InterPro"/>
</dbReference>
<dbReference type="GO" id="GO:0016887">
    <property type="term" value="F:ATP hydrolysis activity"/>
    <property type="evidence" value="ECO:0007669"/>
    <property type="project" value="InterPro"/>
</dbReference>
<dbReference type="GO" id="GO:0140664">
    <property type="term" value="F:ATP-dependent DNA damage sensor activity"/>
    <property type="evidence" value="ECO:0007669"/>
    <property type="project" value="InterPro"/>
</dbReference>
<dbReference type="GO" id="GO:0030983">
    <property type="term" value="F:mismatched DNA binding"/>
    <property type="evidence" value="ECO:0007669"/>
    <property type="project" value="InterPro"/>
</dbReference>
<dbReference type="GO" id="GO:0006298">
    <property type="term" value="P:mismatch repair"/>
    <property type="evidence" value="ECO:0007669"/>
    <property type="project" value="UniProtKB-UniRule"/>
</dbReference>
<dbReference type="CDD" id="cd16926">
    <property type="entry name" value="HATPase_MutL-MLH-PMS-like"/>
    <property type="match status" value="1"/>
</dbReference>
<dbReference type="CDD" id="cd00782">
    <property type="entry name" value="MutL_Trans"/>
    <property type="match status" value="1"/>
</dbReference>
<dbReference type="FunFam" id="3.30.565.10:FF:000003">
    <property type="entry name" value="DNA mismatch repair endonuclease MutL"/>
    <property type="match status" value="1"/>
</dbReference>
<dbReference type="Gene3D" id="3.30.230.10">
    <property type="match status" value="1"/>
</dbReference>
<dbReference type="Gene3D" id="3.30.565.10">
    <property type="entry name" value="Histidine kinase-like ATPase, C-terminal domain"/>
    <property type="match status" value="1"/>
</dbReference>
<dbReference type="Gene3D" id="3.30.1540.20">
    <property type="entry name" value="MutL, C-terminal domain, dimerisation subdomain"/>
    <property type="match status" value="1"/>
</dbReference>
<dbReference type="Gene3D" id="3.30.1370.100">
    <property type="entry name" value="MutL, C-terminal domain, regulatory subdomain"/>
    <property type="match status" value="1"/>
</dbReference>
<dbReference type="HAMAP" id="MF_00149">
    <property type="entry name" value="DNA_mis_repair"/>
    <property type="match status" value="1"/>
</dbReference>
<dbReference type="InterPro" id="IPR014762">
    <property type="entry name" value="DNA_mismatch_repair_CS"/>
</dbReference>
<dbReference type="InterPro" id="IPR020667">
    <property type="entry name" value="DNA_mismatch_repair_MutL"/>
</dbReference>
<dbReference type="InterPro" id="IPR013507">
    <property type="entry name" value="DNA_mismatch_S5_2-like"/>
</dbReference>
<dbReference type="InterPro" id="IPR036890">
    <property type="entry name" value="HATPase_C_sf"/>
</dbReference>
<dbReference type="InterPro" id="IPR002099">
    <property type="entry name" value="MutL/Mlh/PMS"/>
</dbReference>
<dbReference type="InterPro" id="IPR038973">
    <property type="entry name" value="MutL/Mlh/Pms-like"/>
</dbReference>
<dbReference type="InterPro" id="IPR014790">
    <property type="entry name" value="MutL_C"/>
</dbReference>
<dbReference type="InterPro" id="IPR042120">
    <property type="entry name" value="MutL_C_dimsub"/>
</dbReference>
<dbReference type="InterPro" id="IPR042121">
    <property type="entry name" value="MutL_C_regsub"/>
</dbReference>
<dbReference type="InterPro" id="IPR037198">
    <property type="entry name" value="MutL_C_sf"/>
</dbReference>
<dbReference type="InterPro" id="IPR020568">
    <property type="entry name" value="Ribosomal_Su5_D2-typ_SF"/>
</dbReference>
<dbReference type="InterPro" id="IPR014721">
    <property type="entry name" value="Ribsml_uS5_D2-typ_fold_subgr"/>
</dbReference>
<dbReference type="NCBIfam" id="TIGR00585">
    <property type="entry name" value="mutl"/>
    <property type="match status" value="1"/>
</dbReference>
<dbReference type="PANTHER" id="PTHR10073">
    <property type="entry name" value="DNA MISMATCH REPAIR PROTEIN MLH, PMS, MUTL"/>
    <property type="match status" value="1"/>
</dbReference>
<dbReference type="PANTHER" id="PTHR10073:SF12">
    <property type="entry name" value="DNA MISMATCH REPAIR PROTEIN MLH1"/>
    <property type="match status" value="1"/>
</dbReference>
<dbReference type="Pfam" id="PF01119">
    <property type="entry name" value="DNA_mis_repair"/>
    <property type="match status" value="1"/>
</dbReference>
<dbReference type="Pfam" id="PF13589">
    <property type="entry name" value="HATPase_c_3"/>
    <property type="match status" value="1"/>
</dbReference>
<dbReference type="Pfam" id="PF08676">
    <property type="entry name" value="MutL_C"/>
    <property type="match status" value="1"/>
</dbReference>
<dbReference type="SMART" id="SM01340">
    <property type="entry name" value="DNA_mis_repair"/>
    <property type="match status" value="1"/>
</dbReference>
<dbReference type="SMART" id="SM00853">
    <property type="entry name" value="MutL_C"/>
    <property type="match status" value="1"/>
</dbReference>
<dbReference type="SUPFAM" id="SSF55874">
    <property type="entry name" value="ATPase domain of HSP90 chaperone/DNA topoisomerase II/histidine kinase"/>
    <property type="match status" value="1"/>
</dbReference>
<dbReference type="SUPFAM" id="SSF118116">
    <property type="entry name" value="DNA mismatch repair protein MutL"/>
    <property type="match status" value="1"/>
</dbReference>
<dbReference type="SUPFAM" id="SSF54211">
    <property type="entry name" value="Ribosomal protein S5 domain 2-like"/>
    <property type="match status" value="1"/>
</dbReference>
<dbReference type="PROSITE" id="PS00058">
    <property type="entry name" value="DNA_MISMATCH_REPAIR_1"/>
    <property type="match status" value="1"/>
</dbReference>